<dbReference type="EMBL" id="CP017626">
    <property type="protein sequence ID" value="AOW29170.1"/>
    <property type="molecule type" value="Genomic_DNA"/>
</dbReference>
<dbReference type="RefSeq" id="XP_711556.1">
    <property type="nucleotide sequence ID" value="XM_706464.1"/>
</dbReference>
<dbReference type="SMR" id="Q59P87"/>
<dbReference type="BioGRID" id="1229952">
    <property type="interactions" value="1"/>
</dbReference>
<dbReference type="FunCoup" id="Q59P87">
    <property type="interactions" value="113"/>
</dbReference>
<dbReference type="STRING" id="237561.Q59P87"/>
<dbReference type="EnsemblFungi" id="C4_04210C_A-T">
    <property type="protein sequence ID" value="C4_04210C_A-T-p1"/>
    <property type="gene ID" value="C4_04210C_A"/>
</dbReference>
<dbReference type="GeneID" id="3646859"/>
<dbReference type="KEGG" id="cal:CAALFM_C404210CA"/>
<dbReference type="CGD" id="CAL0000190883">
    <property type="gene designation" value="SOH1"/>
</dbReference>
<dbReference type="VEuPathDB" id="FungiDB:C4_04210C_A"/>
<dbReference type="eggNOG" id="KOG4086">
    <property type="taxonomic scope" value="Eukaryota"/>
</dbReference>
<dbReference type="HOGENOM" id="CLU_071681_3_1_1"/>
<dbReference type="InParanoid" id="Q59P87"/>
<dbReference type="OMA" id="YLEYWCE"/>
<dbReference type="OrthoDB" id="10257739at2759"/>
<dbReference type="PRO" id="PR:Q59P87"/>
<dbReference type="Proteomes" id="UP000000559">
    <property type="component" value="Chromosome 4"/>
</dbReference>
<dbReference type="GO" id="GO:0070847">
    <property type="term" value="C:core mediator complex"/>
    <property type="evidence" value="ECO:0000318"/>
    <property type="project" value="GO_Central"/>
</dbReference>
<dbReference type="GO" id="GO:0016592">
    <property type="term" value="C:mediator complex"/>
    <property type="evidence" value="ECO:0000318"/>
    <property type="project" value="GO_Central"/>
</dbReference>
<dbReference type="GO" id="GO:0003713">
    <property type="term" value="F:transcription coactivator activity"/>
    <property type="evidence" value="ECO:0007669"/>
    <property type="project" value="EnsemblFungi"/>
</dbReference>
<dbReference type="GO" id="GO:0006281">
    <property type="term" value="P:DNA repair"/>
    <property type="evidence" value="ECO:0007669"/>
    <property type="project" value="EnsemblFungi"/>
</dbReference>
<dbReference type="GO" id="GO:0044182">
    <property type="term" value="P:filamentous growth of a population of unicellular organisms"/>
    <property type="evidence" value="ECO:0000315"/>
    <property type="project" value="CGD"/>
</dbReference>
<dbReference type="GO" id="GO:0070783">
    <property type="term" value="P:growth of unicellular organism as a thread of attached cells"/>
    <property type="evidence" value="ECO:0000315"/>
    <property type="project" value="CGD"/>
</dbReference>
<dbReference type="GO" id="GO:0006311">
    <property type="term" value="P:meiotic gene conversion"/>
    <property type="evidence" value="ECO:0007669"/>
    <property type="project" value="EnsemblFungi"/>
</dbReference>
<dbReference type="GO" id="GO:1900233">
    <property type="term" value="P:positive regulation of single-species biofilm formation on inanimate substrate"/>
    <property type="evidence" value="ECO:0000315"/>
    <property type="project" value="CGD"/>
</dbReference>
<dbReference type="GO" id="GO:0032968">
    <property type="term" value="P:positive regulation of transcription elongation by RNA polymerase II"/>
    <property type="evidence" value="ECO:0007669"/>
    <property type="project" value="EnsemblFungi"/>
</dbReference>
<dbReference type="GO" id="GO:0060261">
    <property type="term" value="P:positive regulation of transcription initiation by RNA polymerase II"/>
    <property type="evidence" value="ECO:0007669"/>
    <property type="project" value="EnsemblFungi"/>
</dbReference>
<dbReference type="GO" id="GO:0006357">
    <property type="term" value="P:regulation of transcription by RNA polymerase II"/>
    <property type="evidence" value="ECO:0000318"/>
    <property type="project" value="GO_Central"/>
</dbReference>
<dbReference type="GO" id="GO:0051123">
    <property type="term" value="P:RNA polymerase II preinitiation complex assembly"/>
    <property type="evidence" value="ECO:0007669"/>
    <property type="project" value="EnsemblFungi"/>
</dbReference>
<dbReference type="GO" id="GO:0000920">
    <property type="term" value="P:septum digestion after cytokinesis"/>
    <property type="evidence" value="ECO:0000315"/>
    <property type="project" value="CGD"/>
</dbReference>
<dbReference type="GO" id="GO:0044011">
    <property type="term" value="P:single-species biofilm formation on inanimate substrate"/>
    <property type="evidence" value="ECO:0000315"/>
    <property type="project" value="CGD"/>
</dbReference>
<dbReference type="FunFam" id="1.10.10.1340:FF:000001">
    <property type="entry name" value="Mediator of RNA polymerase II transcription subunit 31"/>
    <property type="match status" value="1"/>
</dbReference>
<dbReference type="Gene3D" id="1.10.10.1340">
    <property type="entry name" value="Mediator of RNA polymerase II, submodule Med31 (Soh1)"/>
    <property type="match status" value="1"/>
</dbReference>
<dbReference type="InterPro" id="IPR038089">
    <property type="entry name" value="Med31_sf"/>
</dbReference>
<dbReference type="InterPro" id="IPR008831">
    <property type="entry name" value="Mediator_Med31"/>
</dbReference>
<dbReference type="PANTHER" id="PTHR13186">
    <property type="entry name" value="MEDIATOR OF RNA POLYMERASE II TRANSCRIPTION SUBUNIT 31"/>
    <property type="match status" value="1"/>
</dbReference>
<dbReference type="Pfam" id="PF05669">
    <property type="entry name" value="Med31"/>
    <property type="match status" value="1"/>
</dbReference>
<sequence length="146" mass="17672">MSAQTDQPITEQQKKEQEQYTNLINSLPTRWEIELEFVQSLSNIPYVNYLAQNNYFNDENFINYLNYLQYWTQPEYSKFLVYPNCLHILKLLQDENFRKNIINQDFMNSLMNDMVKRWQSNANDQDENKEKEENKEVPEVRINGTN</sequence>
<organism>
    <name type="scientific">Candida albicans (strain SC5314 / ATCC MYA-2876)</name>
    <name type="common">Yeast</name>
    <dbReference type="NCBI Taxonomy" id="237561"/>
    <lineage>
        <taxon>Eukaryota</taxon>
        <taxon>Fungi</taxon>
        <taxon>Dikarya</taxon>
        <taxon>Ascomycota</taxon>
        <taxon>Saccharomycotina</taxon>
        <taxon>Pichiomycetes</taxon>
        <taxon>Debaryomycetaceae</taxon>
        <taxon>Candida/Lodderomyces clade</taxon>
        <taxon>Candida</taxon>
    </lineage>
</organism>
<reference key="1">
    <citation type="journal article" date="2004" name="Proc. Natl. Acad. Sci. U.S.A.">
        <title>The diploid genome sequence of Candida albicans.</title>
        <authorList>
            <person name="Jones T."/>
            <person name="Federspiel N.A."/>
            <person name="Chibana H."/>
            <person name="Dungan J."/>
            <person name="Kalman S."/>
            <person name="Magee B.B."/>
            <person name="Newport G."/>
            <person name="Thorstenson Y.R."/>
            <person name="Agabian N."/>
            <person name="Magee P.T."/>
            <person name="Davis R.W."/>
            <person name="Scherer S."/>
        </authorList>
    </citation>
    <scope>NUCLEOTIDE SEQUENCE [LARGE SCALE GENOMIC DNA]</scope>
    <source>
        <strain>SC5314 / ATCC MYA-2876</strain>
    </source>
</reference>
<reference key="2">
    <citation type="journal article" date="2007" name="Genome Biol.">
        <title>Assembly of the Candida albicans genome into sixteen supercontigs aligned on the eight chromosomes.</title>
        <authorList>
            <person name="van het Hoog M."/>
            <person name="Rast T.J."/>
            <person name="Martchenko M."/>
            <person name="Grindle S."/>
            <person name="Dignard D."/>
            <person name="Hogues H."/>
            <person name="Cuomo C."/>
            <person name="Berriman M."/>
            <person name="Scherer S."/>
            <person name="Magee B.B."/>
            <person name="Whiteway M."/>
            <person name="Chibana H."/>
            <person name="Nantel A."/>
            <person name="Magee P.T."/>
        </authorList>
    </citation>
    <scope>GENOME REANNOTATION</scope>
    <source>
        <strain>SC5314 / ATCC MYA-2876</strain>
    </source>
</reference>
<reference key="3">
    <citation type="journal article" date="2013" name="Genome Biol.">
        <title>Assembly of a phased diploid Candida albicans genome facilitates allele-specific measurements and provides a simple model for repeat and indel structure.</title>
        <authorList>
            <person name="Muzzey D."/>
            <person name="Schwartz K."/>
            <person name="Weissman J.S."/>
            <person name="Sherlock G."/>
        </authorList>
    </citation>
    <scope>NUCLEOTIDE SEQUENCE [LARGE SCALE GENOMIC DNA]</scope>
    <scope>GENOME REANNOTATION</scope>
    <source>
        <strain>SC5314 / ATCC MYA-2876</strain>
    </source>
</reference>
<proteinExistence type="inferred from homology"/>
<evidence type="ECO:0000250" key="1"/>
<evidence type="ECO:0000256" key="2">
    <source>
        <dbReference type="SAM" id="MobiDB-lite"/>
    </source>
</evidence>
<evidence type="ECO:0000305" key="3"/>
<accession>Q59P87</accession>
<accession>A0A1D8PM10</accession>
<gene>
    <name type="primary">SOH1</name>
    <name type="synonym">MED31</name>
    <name type="ordered locus">CAALFM_C404210CA</name>
    <name type="ORF">CaO19.1429</name>
    <name type="ORF">CaO19.9005</name>
</gene>
<keyword id="KW-0010">Activator</keyword>
<keyword id="KW-0539">Nucleus</keyword>
<keyword id="KW-1185">Reference proteome</keyword>
<keyword id="KW-0804">Transcription</keyword>
<keyword id="KW-0805">Transcription regulation</keyword>
<name>MED31_CANAL</name>
<feature type="chain" id="PRO_0000305719" description="Mediator of RNA polymerase II transcription subunit 31">
    <location>
        <begin position="1"/>
        <end position="146"/>
    </location>
</feature>
<feature type="region of interest" description="Disordered" evidence="2">
    <location>
        <begin position="121"/>
        <end position="146"/>
    </location>
</feature>
<feature type="compositionally biased region" description="Basic and acidic residues" evidence="2">
    <location>
        <begin position="126"/>
        <end position="139"/>
    </location>
</feature>
<protein>
    <recommendedName>
        <fullName>Mediator of RNA polymerase II transcription subunit 31</fullName>
    </recommendedName>
    <alternativeName>
        <fullName>Mediator complex subunit 31</fullName>
    </alternativeName>
</protein>
<comment type="function">
    <text evidence="1">Component of the Mediator complex, a coactivator involved in the regulated transcription of nearly all RNA polymerase II-dependent genes. Mediator functions as a bridge to convey information from gene-specific regulatory proteins to the basal RNA polymerase II transcription machinery. Mediator is recruited to promoters by direct interactions with regulatory proteins and serves as a scaffold for the assembly of a functional preinitiation complex with RNA polymerase II and the general transcription factors (By similarity).</text>
</comment>
<comment type="subunit">
    <text evidence="1">Component of the Mediator complex.</text>
</comment>
<comment type="subcellular location">
    <subcellularLocation>
        <location evidence="1">Nucleus</location>
    </subcellularLocation>
</comment>
<comment type="similarity">
    <text evidence="3">Belongs to the Mediator complex subunit 31 family.</text>
</comment>